<gene>
    <name type="primary">irx4-a</name>
    <name evidence="8" type="synonym">irx4</name>
</gene>
<accession>Q90XW6</accession>
<sequence>MSYPQFGYPYSSTPQFLMTTNSLSTCCESSGRSLSDSAAAASAQTPVYCPVYESRLLATARHELNSAAALGVYGNPYTSTQGYGNYVTYGADASAFYSLNAFESKDGTGSAHAGIPQTAAYYPYEHTLSQYQYDRYGTMDGSSRRKNATRETTSTLKAWLQEHRKNPYPTKGEKIMLAIITKMTLTQVSTWFANARRRLKKENKMTWPPRNKCSDEKRPYDEEEEEEEEEEDSQKATIKNEKKTVDEEVVREDKALDLSDLEDFDTIESESSECELKQPFHHQPQDGHQLRQRDCVNDHCKDVILKMPLNSTVNQELDRTNICLKSGVDQCEQDVLRGRQRSGESKACFQQQQILDSKPRIWSLAHTATSLNQTEYPSCMLKHQGLSSPSSSSSSSAVSTPVCVIDRRQDSPVTSLRNWVDGVFHDPLFRHSTLNQALTNTTVSWATTKGTLIDSGSLGRSVGNPTNVKGQLPNIPHDTNKEFIAFQKSGSKMFCS</sequence>
<dbReference type="EMBL" id="AF338157">
    <property type="protein sequence ID" value="AAK96065.1"/>
    <property type="molecule type" value="mRNA"/>
</dbReference>
<dbReference type="RefSeq" id="NP_001090204.1">
    <property type="nucleotide sequence ID" value="NM_001096735.1"/>
</dbReference>
<dbReference type="SMR" id="Q90XW6"/>
<dbReference type="GeneID" id="779102"/>
<dbReference type="KEGG" id="xla:779102"/>
<dbReference type="AGR" id="Xenbase:XB-GENE-865388"/>
<dbReference type="CTD" id="779102"/>
<dbReference type="Xenbase" id="XB-GENE-865388">
    <property type="gene designation" value="irx4.L"/>
</dbReference>
<dbReference type="OMA" id="AEPPGCE"/>
<dbReference type="OrthoDB" id="5399138at2759"/>
<dbReference type="Proteomes" id="UP000186698">
    <property type="component" value="Chromosome 6L"/>
</dbReference>
<dbReference type="Bgee" id="779102">
    <property type="expression patterns" value="Expressed in heart and 4 other cell types or tissues"/>
</dbReference>
<dbReference type="GO" id="GO:0005634">
    <property type="term" value="C:nucleus"/>
    <property type="evidence" value="ECO:0000250"/>
    <property type="project" value="UniProtKB"/>
</dbReference>
<dbReference type="GO" id="GO:0000981">
    <property type="term" value="F:DNA-binding transcription factor activity, RNA polymerase II-specific"/>
    <property type="evidence" value="ECO:0000318"/>
    <property type="project" value="GO_Central"/>
</dbReference>
<dbReference type="GO" id="GO:0000978">
    <property type="term" value="F:RNA polymerase II cis-regulatory region sequence-specific DNA binding"/>
    <property type="evidence" value="ECO:0000318"/>
    <property type="project" value="GO_Central"/>
</dbReference>
<dbReference type="GO" id="GO:0007420">
    <property type="term" value="P:brain development"/>
    <property type="evidence" value="ECO:0000315"/>
    <property type="project" value="UniProtKB"/>
</dbReference>
<dbReference type="GO" id="GO:0048468">
    <property type="term" value="P:cell development"/>
    <property type="evidence" value="ECO:0000318"/>
    <property type="project" value="GO_Central"/>
</dbReference>
<dbReference type="GO" id="GO:0009953">
    <property type="term" value="P:dorsal/ventral pattern formation"/>
    <property type="evidence" value="ECO:0000315"/>
    <property type="project" value="UniProtKB"/>
</dbReference>
<dbReference type="GO" id="GO:0007507">
    <property type="term" value="P:heart development"/>
    <property type="evidence" value="ECO:0000250"/>
    <property type="project" value="UniProtKB"/>
</dbReference>
<dbReference type="GO" id="GO:0030182">
    <property type="term" value="P:neuron differentiation"/>
    <property type="evidence" value="ECO:0000318"/>
    <property type="project" value="GO_Central"/>
</dbReference>
<dbReference type="GO" id="GO:0009954">
    <property type="term" value="P:proximal/distal pattern formation"/>
    <property type="evidence" value="ECO:0000315"/>
    <property type="project" value="UniProtKB"/>
</dbReference>
<dbReference type="GO" id="GO:0006357">
    <property type="term" value="P:regulation of transcription by RNA polymerase II"/>
    <property type="evidence" value="ECO:0000318"/>
    <property type="project" value="GO_Central"/>
</dbReference>
<dbReference type="CDD" id="cd00086">
    <property type="entry name" value="homeodomain"/>
    <property type="match status" value="1"/>
</dbReference>
<dbReference type="FunFam" id="1.10.10.60:FF:000003">
    <property type="entry name" value="Iroquois-class homeobox protein IRX"/>
    <property type="match status" value="1"/>
</dbReference>
<dbReference type="Gene3D" id="1.10.10.60">
    <property type="entry name" value="Homeodomain-like"/>
    <property type="match status" value="1"/>
</dbReference>
<dbReference type="InterPro" id="IPR001356">
    <property type="entry name" value="HD"/>
</dbReference>
<dbReference type="InterPro" id="IPR017970">
    <property type="entry name" value="Homeobox_CS"/>
</dbReference>
<dbReference type="InterPro" id="IPR009057">
    <property type="entry name" value="Homeodomain-like_sf"/>
</dbReference>
<dbReference type="InterPro" id="IPR003893">
    <property type="entry name" value="Iroquois_homeo"/>
</dbReference>
<dbReference type="InterPro" id="IPR008422">
    <property type="entry name" value="KN_HD"/>
</dbReference>
<dbReference type="PANTHER" id="PTHR11211">
    <property type="entry name" value="IROQUOIS-CLASS HOMEODOMAIN PROTEIN IRX"/>
    <property type="match status" value="1"/>
</dbReference>
<dbReference type="PANTHER" id="PTHR11211:SF16">
    <property type="entry name" value="IROQUOIS-CLASS HOMEODOMAIN PROTEIN IRX-4"/>
    <property type="match status" value="1"/>
</dbReference>
<dbReference type="Pfam" id="PF05920">
    <property type="entry name" value="Homeobox_KN"/>
    <property type="match status" value="1"/>
</dbReference>
<dbReference type="SMART" id="SM00389">
    <property type="entry name" value="HOX"/>
    <property type="match status" value="1"/>
</dbReference>
<dbReference type="SMART" id="SM00548">
    <property type="entry name" value="IRO"/>
    <property type="match status" value="1"/>
</dbReference>
<dbReference type="SUPFAM" id="SSF46689">
    <property type="entry name" value="Homeodomain-like"/>
    <property type="match status" value="1"/>
</dbReference>
<dbReference type="PROSITE" id="PS00027">
    <property type="entry name" value="HOMEOBOX_1"/>
    <property type="match status" value="1"/>
</dbReference>
<dbReference type="PROSITE" id="PS50071">
    <property type="entry name" value="HOMEOBOX_2"/>
    <property type="match status" value="1"/>
</dbReference>
<protein>
    <recommendedName>
        <fullName>Iroquois-class homeodomain protein irx-4-A</fullName>
    </recommendedName>
    <alternativeName>
        <fullName>Iroquois homeobox protein 4-A</fullName>
    </alternativeName>
</protein>
<proteinExistence type="evidence at transcript level"/>
<name>IRX4A_XENLA</name>
<keyword id="KW-0217">Developmental protein</keyword>
<keyword id="KW-0221">Differentiation</keyword>
<keyword id="KW-0238">DNA-binding</keyword>
<keyword id="KW-0371">Homeobox</keyword>
<keyword id="KW-0524">Neurogenesis</keyword>
<keyword id="KW-0539">Nucleus</keyword>
<keyword id="KW-1185">Reference proteome</keyword>
<keyword id="KW-0804">Transcription</keyword>
<keyword id="KW-0805">Transcription regulation</keyword>
<organism>
    <name type="scientific">Xenopus laevis</name>
    <name type="common">African clawed frog</name>
    <dbReference type="NCBI Taxonomy" id="8355"/>
    <lineage>
        <taxon>Eukaryota</taxon>
        <taxon>Metazoa</taxon>
        <taxon>Chordata</taxon>
        <taxon>Craniata</taxon>
        <taxon>Vertebrata</taxon>
        <taxon>Euteleostomi</taxon>
        <taxon>Amphibia</taxon>
        <taxon>Batrachia</taxon>
        <taxon>Anura</taxon>
        <taxon>Pipoidea</taxon>
        <taxon>Pipidae</taxon>
        <taxon>Xenopodinae</taxon>
        <taxon>Xenopus</taxon>
        <taxon>Xenopus</taxon>
    </lineage>
</organism>
<feature type="chain" id="PRO_0000388718" description="Iroquois-class homeodomain protein irx-4-A">
    <location>
        <begin position="1"/>
        <end position="496"/>
    </location>
</feature>
<feature type="DNA-binding region" description="Homeobox; TALE-type" evidence="2">
    <location>
        <begin position="141"/>
        <end position="203"/>
    </location>
</feature>
<feature type="region of interest" description="Disordered" evidence="3">
    <location>
        <begin position="203"/>
        <end position="246"/>
    </location>
</feature>
<feature type="compositionally biased region" description="Acidic residues" evidence="3">
    <location>
        <begin position="221"/>
        <end position="232"/>
    </location>
</feature>
<evidence type="ECO:0000255" key="1"/>
<evidence type="ECO:0000255" key="2">
    <source>
        <dbReference type="PROSITE-ProRule" id="PRU00108"/>
    </source>
</evidence>
<evidence type="ECO:0000256" key="3">
    <source>
        <dbReference type="SAM" id="MobiDB-lite"/>
    </source>
</evidence>
<evidence type="ECO:0000269" key="4">
    <source>
    </source>
</evidence>
<evidence type="ECO:0000269" key="5">
    <source>
    </source>
</evidence>
<evidence type="ECO:0000269" key="6">
    <source>
    </source>
</evidence>
<evidence type="ECO:0000305" key="7"/>
<evidence type="ECO:0000312" key="8">
    <source>
        <dbReference type="EMBL" id="AAK96065.1"/>
    </source>
</evidence>
<reference evidence="7 8" key="1">
    <citation type="journal article" date="2001" name="Dev. Genes Evol.">
        <title>Developmental expression of the Xenopus Iroquois-family homeobox genes, Irx4 and Irx5.</title>
        <authorList>
            <person name="Garriock R.J."/>
            <person name="Vokes S.A."/>
            <person name="Small E.M."/>
            <person name="Larson R."/>
            <person name="Krieg P.A."/>
        </authorList>
    </citation>
    <scope>NUCLEOTIDE SEQUENCE [MRNA]</scope>
    <scope>TISSUE SPECIFICITY</scope>
    <source>
        <tissue evidence="4">Tadpole</tissue>
    </source>
</reference>
<reference evidence="7" key="2">
    <citation type="journal article" date="2007" name="Genes Dev.">
        <title>The prepattern transcription factor Irx3 directs nephron segment identity.</title>
        <authorList>
            <person name="Reggiani L."/>
            <person name="Raciti D."/>
            <person name="Airik R."/>
            <person name="Kispert A."/>
            <person name="Braendli A.W."/>
        </authorList>
    </citation>
    <scope>LACK OF EXPRESSION IN THE PRONEPHROS</scope>
</reference>
<reference evidence="7" key="3">
    <citation type="journal article" date="2008" name="Development">
        <title>A dual requirement for Iroquois genes during Xenopus kidney development.</title>
        <authorList>
            <person name="Alarcon P."/>
            <person name="Rodriguez-Seguel E."/>
            <person name="Fernandez-Gonzalez A."/>
            <person name="Rubio R."/>
            <person name="Gomez-Skarmeta J.L."/>
        </authorList>
    </citation>
    <scope>LACK OF REQUIREMENT FOR PRONEPHROS DEVELOPMENT</scope>
    <scope>TISSUE SPECIFICITY</scope>
</reference>
<reference evidence="7" key="4">
    <citation type="journal article" date="2009" name="Dev. Biol.">
        <title>The Xenopus Irx genes are essential for neural patterning and define the border between prethalamus and thalamus through mutual antagonism with the anterior repressors Fezf and Arx.</title>
        <authorList>
            <person name="Rodriguez-Seguel E."/>
            <person name="Alarcon P."/>
            <person name="Gomez-Skarmeta J.L."/>
        </authorList>
    </citation>
    <scope>FUNCTION</scope>
    <scope>TISSUE SPECIFICITY</scope>
</reference>
<comment type="function">
    <text evidence="5 6">Acts partially redundantly with other irx members in neural patterning. Required for formation of the posterior forebrain, midbrain, hindbrain, and to a lesser extent, spinal cord. Patterns the neuroectoderm in both the anterior/posterior and dorsal/ventral axes. Does not appear to play a role in pronephros kidney development.</text>
</comment>
<comment type="subcellular location">
    <subcellularLocation>
        <location evidence="1 7">Nucleus</location>
    </subcellularLocation>
</comment>
<comment type="tissue specificity">
    <text evidence="4 5 6">Expressed in the neural plate in overlapping patterns with other irx members, which all share an anterior border of expression. At stage 20, expressed in a subset of cells in the developing hindbrain with expression appearing above the otic vesicle by stage 26. Expression in retina cells begins at stage 28, continuing at later stages and is limited to a subset of retinal cells of the optic cup. Also expressed in the ventricle of the heart from stage 36 (late tailbud) onwards. Only expressed in the pronephros at tadpole stage.</text>
</comment>
<comment type="similarity">
    <text evidence="1">Belongs to the TALE/IRO homeobox family.</text>
</comment>